<dbReference type="EMBL" id="CP000247">
    <property type="protein sequence ID" value="ABG71219.1"/>
    <property type="molecule type" value="Genomic_DNA"/>
</dbReference>
<dbReference type="RefSeq" id="WP_001158035.1">
    <property type="nucleotide sequence ID" value="NC_008253.1"/>
</dbReference>
<dbReference type="SMR" id="Q0TCW0"/>
<dbReference type="GeneID" id="75206004"/>
<dbReference type="KEGG" id="ecp:ECP_3237"/>
<dbReference type="HOGENOM" id="CLU_080999_3_1_6"/>
<dbReference type="Proteomes" id="UP000009182">
    <property type="component" value="Chromosome"/>
</dbReference>
<dbReference type="GO" id="GO:0097367">
    <property type="term" value="F:carbohydrate derivative binding"/>
    <property type="evidence" value="ECO:0007669"/>
    <property type="project" value="InterPro"/>
</dbReference>
<dbReference type="GO" id="GO:1901135">
    <property type="term" value="P:carbohydrate derivative metabolic process"/>
    <property type="evidence" value="ECO:0007669"/>
    <property type="project" value="InterPro"/>
</dbReference>
<dbReference type="GO" id="GO:0006260">
    <property type="term" value="P:DNA replication"/>
    <property type="evidence" value="ECO:0007669"/>
    <property type="project" value="UniProtKB-UniRule"/>
</dbReference>
<dbReference type="CDD" id="cd05006">
    <property type="entry name" value="SIS_GmhA"/>
    <property type="match status" value="1"/>
</dbReference>
<dbReference type="FunFam" id="3.40.50.10490:FF:000006">
    <property type="entry name" value="DnaA initiator-associating protein DiaA"/>
    <property type="match status" value="1"/>
</dbReference>
<dbReference type="Gene3D" id="3.40.50.10490">
    <property type="entry name" value="Glucose-6-phosphate isomerase like protein, domain 1"/>
    <property type="match status" value="1"/>
</dbReference>
<dbReference type="HAMAP" id="MF_01157">
    <property type="entry name" value="SIS_DiaA"/>
    <property type="match status" value="1"/>
</dbReference>
<dbReference type="InterPro" id="IPR023070">
    <property type="entry name" value="DiaA"/>
</dbReference>
<dbReference type="InterPro" id="IPR035461">
    <property type="entry name" value="GmhA/DiaA"/>
</dbReference>
<dbReference type="InterPro" id="IPR001347">
    <property type="entry name" value="SIS_dom"/>
</dbReference>
<dbReference type="InterPro" id="IPR046348">
    <property type="entry name" value="SIS_dom_sf"/>
</dbReference>
<dbReference type="InterPro" id="IPR050099">
    <property type="entry name" value="SIS_GmhA/DiaA_subfam"/>
</dbReference>
<dbReference type="NCBIfam" id="NF008138">
    <property type="entry name" value="PRK10886.1"/>
    <property type="match status" value="1"/>
</dbReference>
<dbReference type="NCBIfam" id="NF010546">
    <property type="entry name" value="PRK13936.1"/>
    <property type="match status" value="1"/>
</dbReference>
<dbReference type="PANTHER" id="PTHR30390:SF6">
    <property type="entry name" value="DNAA INITIATOR-ASSOCIATING PROTEIN DIAA"/>
    <property type="match status" value="1"/>
</dbReference>
<dbReference type="PANTHER" id="PTHR30390">
    <property type="entry name" value="SEDOHEPTULOSE 7-PHOSPHATE ISOMERASE / DNAA INITIATOR-ASSOCIATING FACTOR FOR REPLICATION INITIATION"/>
    <property type="match status" value="1"/>
</dbReference>
<dbReference type="Pfam" id="PF13580">
    <property type="entry name" value="SIS_2"/>
    <property type="match status" value="1"/>
</dbReference>
<dbReference type="SUPFAM" id="SSF53697">
    <property type="entry name" value="SIS domain"/>
    <property type="match status" value="1"/>
</dbReference>
<dbReference type="PROSITE" id="PS51464">
    <property type="entry name" value="SIS"/>
    <property type="match status" value="1"/>
</dbReference>
<name>DIAA_ECOL5</name>
<gene>
    <name evidence="1" type="primary">diaA</name>
    <name type="ordered locus">ECP_3237</name>
</gene>
<keyword id="KW-0235">DNA replication</keyword>
<evidence type="ECO:0000255" key="1">
    <source>
        <dbReference type="HAMAP-Rule" id="MF_01157"/>
    </source>
</evidence>
<reference key="1">
    <citation type="journal article" date="2006" name="Mol. Microbiol.">
        <title>Role of pathogenicity island-associated integrases in the genome plasticity of uropathogenic Escherichia coli strain 536.</title>
        <authorList>
            <person name="Hochhut B."/>
            <person name="Wilde C."/>
            <person name="Balling G."/>
            <person name="Middendorf B."/>
            <person name="Dobrindt U."/>
            <person name="Brzuszkiewicz E."/>
            <person name="Gottschalk G."/>
            <person name="Carniel E."/>
            <person name="Hacker J."/>
        </authorList>
    </citation>
    <scope>NUCLEOTIDE SEQUENCE [LARGE SCALE GENOMIC DNA]</scope>
    <source>
        <strain>536 / UPEC</strain>
    </source>
</reference>
<feature type="chain" id="PRO_1000065541" description="DnaA initiator-associating protein DiaA">
    <location>
        <begin position="1"/>
        <end position="196"/>
    </location>
</feature>
<feature type="domain" description="SIS" evidence="1">
    <location>
        <begin position="34"/>
        <end position="196"/>
    </location>
</feature>
<proteinExistence type="inferred from homology"/>
<organism>
    <name type="scientific">Escherichia coli O6:K15:H31 (strain 536 / UPEC)</name>
    <dbReference type="NCBI Taxonomy" id="362663"/>
    <lineage>
        <taxon>Bacteria</taxon>
        <taxon>Pseudomonadati</taxon>
        <taxon>Pseudomonadota</taxon>
        <taxon>Gammaproteobacteria</taxon>
        <taxon>Enterobacterales</taxon>
        <taxon>Enterobacteriaceae</taxon>
        <taxon>Escherichia</taxon>
    </lineage>
</organism>
<comment type="function">
    <text evidence="1">Required for the timely initiation of chromosomal replication via direct interactions with the DnaA initiator protein.</text>
</comment>
<comment type="subunit">
    <text evidence="1">Homotetramer; dimer of dimers.</text>
</comment>
<comment type="similarity">
    <text evidence="1">Belongs to the SIS family. DiaA subfamily.</text>
</comment>
<sequence length="196" mass="21090">MQERIKACFTESIQTQIAAAEALPDAISRAAMTLVQSLLNGNKILCCGNGTSAANAQHFAASMINRFETERPSLPAIALNTDNVVLTAIANDRLHDEVYAKQVRALGHAGDVLLAISTRGNSRDIVKAVEAAVTRDMTIVALTGYDGGELAGLLGPQDVEIRIPSHRSARIQEMHMLTVNCLCDLIDNTLFPHQDV</sequence>
<accession>Q0TCW0</accession>
<protein>
    <recommendedName>
        <fullName evidence="1">DnaA initiator-associating protein DiaA</fullName>
    </recommendedName>
</protein>